<sequence length="257" mass="29845">MYIPTISPYAFKIGPIDVHWYGIFMAISIAIGGYYLYRQAMKLNYDEDFLLNLLMIVVISGVVGARLMFVLANYPEWFIKDPVQVLKIYEGGLSWHGAVLGGFLAGLYYCRKKGVRINPLEDFAVLGLSIGNILVRIGNIFNQEVLGRPTEFAFGRWPAQLVGVAMGIILLIRYFYIQKKHMPDGYQFWSFIFYYQLMRGLIEETVRDNPLIWPVYLNEKWGIGFFTLTQLVTPFILILAYWMIRRVLNDPNKQFYN</sequence>
<gene>
    <name evidence="1" type="primary">lgt</name>
    <name type="ordered locus">Teth39_0751</name>
</gene>
<keyword id="KW-1003">Cell membrane</keyword>
<keyword id="KW-0472">Membrane</keyword>
<keyword id="KW-1185">Reference proteome</keyword>
<keyword id="KW-0808">Transferase</keyword>
<keyword id="KW-0812">Transmembrane</keyword>
<keyword id="KW-1133">Transmembrane helix</keyword>
<organism>
    <name type="scientific">Thermoanaerobacter pseudethanolicus (strain ATCC 33223 / 39E)</name>
    <name type="common">Clostridium thermohydrosulfuricum</name>
    <dbReference type="NCBI Taxonomy" id="340099"/>
    <lineage>
        <taxon>Bacteria</taxon>
        <taxon>Bacillati</taxon>
        <taxon>Bacillota</taxon>
        <taxon>Clostridia</taxon>
        <taxon>Thermoanaerobacterales</taxon>
        <taxon>Thermoanaerobacteraceae</taxon>
        <taxon>Thermoanaerobacter</taxon>
    </lineage>
</organism>
<accession>B0K897</accession>
<protein>
    <recommendedName>
        <fullName evidence="1">Phosphatidylglycerol--prolipoprotein diacylglyceryl transferase</fullName>
        <ecNumber evidence="1">2.5.1.145</ecNumber>
    </recommendedName>
</protein>
<dbReference type="EC" id="2.5.1.145" evidence="1"/>
<dbReference type="EMBL" id="CP000924">
    <property type="protein sequence ID" value="ABY94410.1"/>
    <property type="molecule type" value="Genomic_DNA"/>
</dbReference>
<dbReference type="RefSeq" id="WP_003867223.1">
    <property type="nucleotide sequence ID" value="NC_010321.1"/>
</dbReference>
<dbReference type="SMR" id="B0K897"/>
<dbReference type="STRING" id="340099.Teth39_0751"/>
<dbReference type="KEGG" id="tpd:Teth39_0751"/>
<dbReference type="eggNOG" id="COG0682">
    <property type="taxonomic scope" value="Bacteria"/>
</dbReference>
<dbReference type="HOGENOM" id="CLU_013386_1_1_9"/>
<dbReference type="UniPathway" id="UPA00664"/>
<dbReference type="Proteomes" id="UP000002156">
    <property type="component" value="Chromosome"/>
</dbReference>
<dbReference type="GO" id="GO:0005886">
    <property type="term" value="C:plasma membrane"/>
    <property type="evidence" value="ECO:0007669"/>
    <property type="project" value="UniProtKB-SubCell"/>
</dbReference>
<dbReference type="GO" id="GO:0008961">
    <property type="term" value="F:phosphatidylglycerol-prolipoprotein diacylglyceryl transferase activity"/>
    <property type="evidence" value="ECO:0007669"/>
    <property type="project" value="UniProtKB-UniRule"/>
</dbReference>
<dbReference type="GO" id="GO:0042158">
    <property type="term" value="P:lipoprotein biosynthetic process"/>
    <property type="evidence" value="ECO:0007669"/>
    <property type="project" value="UniProtKB-UniRule"/>
</dbReference>
<dbReference type="HAMAP" id="MF_01147">
    <property type="entry name" value="Lgt"/>
    <property type="match status" value="1"/>
</dbReference>
<dbReference type="InterPro" id="IPR001640">
    <property type="entry name" value="Lgt"/>
</dbReference>
<dbReference type="NCBIfam" id="NF000779">
    <property type="entry name" value="PRK00052.3-5"/>
    <property type="match status" value="1"/>
</dbReference>
<dbReference type="PANTHER" id="PTHR30589:SF0">
    <property type="entry name" value="PHOSPHATIDYLGLYCEROL--PROLIPOPROTEIN DIACYLGLYCERYL TRANSFERASE"/>
    <property type="match status" value="1"/>
</dbReference>
<dbReference type="PANTHER" id="PTHR30589">
    <property type="entry name" value="PROLIPOPROTEIN DIACYLGLYCERYL TRANSFERASE"/>
    <property type="match status" value="1"/>
</dbReference>
<dbReference type="Pfam" id="PF01790">
    <property type="entry name" value="LGT"/>
    <property type="match status" value="1"/>
</dbReference>
<comment type="function">
    <text evidence="1">Catalyzes the transfer of the diacylglyceryl group from phosphatidylglycerol to the sulfhydryl group of the N-terminal cysteine of a prolipoprotein, the first step in the formation of mature lipoproteins.</text>
</comment>
<comment type="catalytic activity">
    <reaction evidence="1">
        <text>L-cysteinyl-[prolipoprotein] + a 1,2-diacyl-sn-glycero-3-phospho-(1'-sn-glycerol) = an S-1,2-diacyl-sn-glyceryl-L-cysteinyl-[prolipoprotein] + sn-glycerol 1-phosphate + H(+)</text>
        <dbReference type="Rhea" id="RHEA:56712"/>
        <dbReference type="Rhea" id="RHEA-COMP:14679"/>
        <dbReference type="Rhea" id="RHEA-COMP:14680"/>
        <dbReference type="ChEBI" id="CHEBI:15378"/>
        <dbReference type="ChEBI" id="CHEBI:29950"/>
        <dbReference type="ChEBI" id="CHEBI:57685"/>
        <dbReference type="ChEBI" id="CHEBI:64716"/>
        <dbReference type="ChEBI" id="CHEBI:140658"/>
        <dbReference type="EC" id="2.5.1.145"/>
    </reaction>
</comment>
<comment type="pathway">
    <text evidence="1">Protein modification; lipoprotein biosynthesis (diacylglyceryl transfer).</text>
</comment>
<comment type="subcellular location">
    <subcellularLocation>
        <location evidence="1">Cell membrane</location>
        <topology evidence="1">Multi-pass membrane protein</topology>
    </subcellularLocation>
</comment>
<comment type="similarity">
    <text evidence="1">Belongs to the Lgt family.</text>
</comment>
<feature type="chain" id="PRO_1000137467" description="Phosphatidylglycerol--prolipoprotein diacylglyceryl transferase">
    <location>
        <begin position="1"/>
        <end position="257"/>
    </location>
</feature>
<feature type="transmembrane region" description="Helical" evidence="1">
    <location>
        <begin position="13"/>
        <end position="33"/>
    </location>
</feature>
<feature type="transmembrane region" description="Helical" evidence="1">
    <location>
        <begin position="49"/>
        <end position="69"/>
    </location>
</feature>
<feature type="transmembrane region" description="Helical" evidence="1">
    <location>
        <begin position="88"/>
        <end position="108"/>
    </location>
</feature>
<feature type="transmembrane region" description="Helical" evidence="1">
    <location>
        <begin position="123"/>
        <end position="143"/>
    </location>
</feature>
<feature type="transmembrane region" description="Helical" evidence="1">
    <location>
        <begin position="152"/>
        <end position="172"/>
    </location>
</feature>
<feature type="transmembrane region" description="Helical" evidence="1">
    <location>
        <begin position="185"/>
        <end position="202"/>
    </location>
</feature>
<feature type="transmembrane region" description="Helical" evidence="1">
    <location>
        <begin position="223"/>
        <end position="243"/>
    </location>
</feature>
<feature type="binding site" evidence="1">
    <location>
        <position position="136"/>
    </location>
    <ligand>
        <name>a 1,2-diacyl-sn-glycero-3-phospho-(1'-sn-glycerol)</name>
        <dbReference type="ChEBI" id="CHEBI:64716"/>
    </ligand>
</feature>
<name>LGT_THEP3</name>
<proteinExistence type="inferred from homology"/>
<reference key="1">
    <citation type="submission" date="2008-01" db="EMBL/GenBank/DDBJ databases">
        <title>Complete sequence of Thermoanaerobacter pseudethanolicus 39E.</title>
        <authorList>
            <person name="Copeland A."/>
            <person name="Lucas S."/>
            <person name="Lapidus A."/>
            <person name="Barry K."/>
            <person name="Glavina del Rio T."/>
            <person name="Dalin E."/>
            <person name="Tice H."/>
            <person name="Pitluck S."/>
            <person name="Bruce D."/>
            <person name="Goodwin L."/>
            <person name="Saunders E."/>
            <person name="Brettin T."/>
            <person name="Detter J.C."/>
            <person name="Han C."/>
            <person name="Schmutz J."/>
            <person name="Larimer F."/>
            <person name="Land M."/>
            <person name="Hauser L."/>
            <person name="Kyrpides N."/>
            <person name="Lykidis A."/>
            <person name="Hemme C."/>
            <person name="Fields M.W."/>
            <person name="He Z."/>
            <person name="Zhou J."/>
            <person name="Richardson P."/>
        </authorList>
    </citation>
    <scope>NUCLEOTIDE SEQUENCE [LARGE SCALE GENOMIC DNA]</scope>
    <source>
        <strain>ATCC 33223 / DSM 2355 / 39E</strain>
    </source>
</reference>
<evidence type="ECO:0000255" key="1">
    <source>
        <dbReference type="HAMAP-Rule" id="MF_01147"/>
    </source>
</evidence>